<protein>
    <recommendedName>
        <fullName evidence="1">Large ribosomal subunit protein bL36</fullName>
    </recommendedName>
    <alternativeName>
        <fullName evidence="2">50S ribosomal protein L36</fullName>
    </alternativeName>
</protein>
<gene>
    <name evidence="1" type="primary">rpmJ</name>
    <name type="ordered locus">SAUSA300_2181</name>
</gene>
<feature type="chain" id="PRO_0000302304" description="Large ribosomal subunit protein bL36">
    <location>
        <begin position="1"/>
        <end position="37"/>
    </location>
</feature>
<accession>Q2FER2</accession>
<name>RL36_STAA3</name>
<comment type="similarity">
    <text evidence="1">Belongs to the bacterial ribosomal protein bL36 family.</text>
</comment>
<evidence type="ECO:0000255" key="1">
    <source>
        <dbReference type="HAMAP-Rule" id="MF_00251"/>
    </source>
</evidence>
<evidence type="ECO:0000305" key="2"/>
<sequence length="37" mass="4305">MKVRPSVKPICEKCKVIKRKGKVMVICENPKHKQRQG</sequence>
<proteinExistence type="inferred from homology"/>
<reference key="1">
    <citation type="journal article" date="2006" name="Lancet">
        <title>Complete genome sequence of USA300, an epidemic clone of community-acquired meticillin-resistant Staphylococcus aureus.</title>
        <authorList>
            <person name="Diep B.A."/>
            <person name="Gill S.R."/>
            <person name="Chang R.F."/>
            <person name="Phan T.H."/>
            <person name="Chen J.H."/>
            <person name="Davidson M.G."/>
            <person name="Lin F."/>
            <person name="Lin J."/>
            <person name="Carleton H.A."/>
            <person name="Mongodin E.F."/>
            <person name="Sensabaugh G.F."/>
            <person name="Perdreau-Remington F."/>
        </authorList>
    </citation>
    <scope>NUCLEOTIDE SEQUENCE [LARGE SCALE GENOMIC DNA]</scope>
    <source>
        <strain>USA300</strain>
    </source>
</reference>
<organism>
    <name type="scientific">Staphylococcus aureus (strain USA300)</name>
    <dbReference type="NCBI Taxonomy" id="367830"/>
    <lineage>
        <taxon>Bacteria</taxon>
        <taxon>Bacillati</taxon>
        <taxon>Bacillota</taxon>
        <taxon>Bacilli</taxon>
        <taxon>Bacillales</taxon>
        <taxon>Staphylococcaceae</taxon>
        <taxon>Staphylococcus</taxon>
    </lineage>
</organism>
<dbReference type="EMBL" id="CP000255">
    <property type="protein sequence ID" value="ABD20714.1"/>
    <property type="molecule type" value="Genomic_DNA"/>
</dbReference>
<dbReference type="RefSeq" id="WP_000868342.1">
    <property type="nucleotide sequence ID" value="NZ_CP027476.1"/>
</dbReference>
<dbReference type="SMR" id="Q2FER2"/>
<dbReference type="GeneID" id="98346539"/>
<dbReference type="KEGG" id="saa:SAUSA300_2181"/>
<dbReference type="HOGENOM" id="CLU_135723_6_2_9"/>
<dbReference type="Proteomes" id="UP000001939">
    <property type="component" value="Chromosome"/>
</dbReference>
<dbReference type="GO" id="GO:0005737">
    <property type="term" value="C:cytoplasm"/>
    <property type="evidence" value="ECO:0007669"/>
    <property type="project" value="UniProtKB-ARBA"/>
</dbReference>
<dbReference type="GO" id="GO:1990904">
    <property type="term" value="C:ribonucleoprotein complex"/>
    <property type="evidence" value="ECO:0007669"/>
    <property type="project" value="UniProtKB-KW"/>
</dbReference>
<dbReference type="GO" id="GO:0005840">
    <property type="term" value="C:ribosome"/>
    <property type="evidence" value="ECO:0007669"/>
    <property type="project" value="UniProtKB-KW"/>
</dbReference>
<dbReference type="GO" id="GO:0003735">
    <property type="term" value="F:structural constituent of ribosome"/>
    <property type="evidence" value="ECO:0007669"/>
    <property type="project" value="InterPro"/>
</dbReference>
<dbReference type="GO" id="GO:0006412">
    <property type="term" value="P:translation"/>
    <property type="evidence" value="ECO:0007669"/>
    <property type="project" value="UniProtKB-UniRule"/>
</dbReference>
<dbReference type="HAMAP" id="MF_00251">
    <property type="entry name" value="Ribosomal_bL36"/>
    <property type="match status" value="1"/>
</dbReference>
<dbReference type="InterPro" id="IPR000473">
    <property type="entry name" value="Ribosomal_bL36"/>
</dbReference>
<dbReference type="InterPro" id="IPR035977">
    <property type="entry name" value="Ribosomal_bL36_sp"/>
</dbReference>
<dbReference type="NCBIfam" id="TIGR01022">
    <property type="entry name" value="rpmJ_bact"/>
    <property type="match status" value="1"/>
</dbReference>
<dbReference type="PANTHER" id="PTHR42888">
    <property type="entry name" value="50S RIBOSOMAL PROTEIN L36, CHLOROPLASTIC"/>
    <property type="match status" value="1"/>
</dbReference>
<dbReference type="PANTHER" id="PTHR42888:SF1">
    <property type="entry name" value="LARGE RIBOSOMAL SUBUNIT PROTEIN BL36C"/>
    <property type="match status" value="1"/>
</dbReference>
<dbReference type="Pfam" id="PF00444">
    <property type="entry name" value="Ribosomal_L36"/>
    <property type="match status" value="1"/>
</dbReference>
<dbReference type="SUPFAM" id="SSF57840">
    <property type="entry name" value="Ribosomal protein L36"/>
    <property type="match status" value="1"/>
</dbReference>
<dbReference type="PROSITE" id="PS00828">
    <property type="entry name" value="RIBOSOMAL_L36"/>
    <property type="match status" value="1"/>
</dbReference>
<keyword id="KW-0687">Ribonucleoprotein</keyword>
<keyword id="KW-0689">Ribosomal protein</keyword>